<name>KDGK_THET8</name>
<dbReference type="EC" id="2.7.1.45"/>
<dbReference type="EMBL" id="AP008227">
    <property type="protein sequence ID" value="BAD71875.1"/>
    <property type="molecule type" value="Genomic_DNA"/>
</dbReference>
<dbReference type="RefSeq" id="WP_011229211.1">
    <property type="nucleotide sequence ID" value="NC_006462.1"/>
</dbReference>
<dbReference type="RefSeq" id="YP_145318.1">
    <property type="nucleotide sequence ID" value="NC_006462.1"/>
</dbReference>
<dbReference type="PDB" id="1V19">
    <property type="method" value="X-ray"/>
    <property type="resolution" value="2.30 A"/>
    <property type="chains" value="A/B=1-309"/>
</dbReference>
<dbReference type="PDB" id="1V1A">
    <property type="method" value="X-ray"/>
    <property type="resolution" value="2.10 A"/>
    <property type="chains" value="A/B=1-309"/>
</dbReference>
<dbReference type="PDB" id="1V1B">
    <property type="method" value="X-ray"/>
    <property type="resolution" value="2.60 A"/>
    <property type="chains" value="A/B/C/D=1-309"/>
</dbReference>
<dbReference type="PDB" id="1V1S">
    <property type="method" value="X-ray"/>
    <property type="resolution" value="3.20 A"/>
    <property type="chains" value="A/B/C/D/E/F=1-309"/>
</dbReference>
<dbReference type="PDBsum" id="1V19"/>
<dbReference type="PDBsum" id="1V1A"/>
<dbReference type="PDBsum" id="1V1B"/>
<dbReference type="PDBsum" id="1V1S"/>
<dbReference type="SMR" id="Q53W83"/>
<dbReference type="EnsemblBacteria" id="BAD71875">
    <property type="protein sequence ID" value="BAD71875"/>
    <property type="gene ID" value="BAD71875"/>
</dbReference>
<dbReference type="GeneID" id="3167896"/>
<dbReference type="KEGG" id="ttj:TTHB079"/>
<dbReference type="PATRIC" id="fig|300852.9.peg.2023"/>
<dbReference type="HOGENOM" id="CLU_027634_6_0_0"/>
<dbReference type="PhylomeDB" id="Q53W83"/>
<dbReference type="UniPathway" id="UPA00856">
    <property type="reaction ID" value="UER00828"/>
</dbReference>
<dbReference type="EvolutionaryTrace" id="Q53W83"/>
<dbReference type="Proteomes" id="UP000000532">
    <property type="component" value="Plasmid pTT27"/>
</dbReference>
<dbReference type="GO" id="GO:0008673">
    <property type="term" value="F:2-dehydro-3-deoxygluconokinase activity"/>
    <property type="evidence" value="ECO:0000314"/>
    <property type="project" value="UniProtKB"/>
</dbReference>
<dbReference type="GO" id="GO:0005524">
    <property type="term" value="F:ATP binding"/>
    <property type="evidence" value="ECO:0000314"/>
    <property type="project" value="UniProtKB"/>
</dbReference>
<dbReference type="GO" id="GO:0000166">
    <property type="term" value="F:nucleotide binding"/>
    <property type="evidence" value="ECO:0000314"/>
    <property type="project" value="UniProtKB"/>
</dbReference>
<dbReference type="GO" id="GO:0016310">
    <property type="term" value="P:phosphorylation"/>
    <property type="evidence" value="ECO:0000314"/>
    <property type="project" value="UniProtKB"/>
</dbReference>
<dbReference type="CDD" id="cd01166">
    <property type="entry name" value="KdgK"/>
    <property type="match status" value="1"/>
</dbReference>
<dbReference type="FunFam" id="3.40.1190.20:FF:000088">
    <property type="entry name" value="2-dehydro-3-deoxygluconokinase"/>
    <property type="match status" value="1"/>
</dbReference>
<dbReference type="Gene3D" id="3.40.1190.20">
    <property type="match status" value="1"/>
</dbReference>
<dbReference type="InterPro" id="IPR052700">
    <property type="entry name" value="Carb_kinase_PfkB-like"/>
</dbReference>
<dbReference type="InterPro" id="IPR002173">
    <property type="entry name" value="Carboh/pur_kinase_PfkB_CS"/>
</dbReference>
<dbReference type="InterPro" id="IPR011611">
    <property type="entry name" value="PfkB_dom"/>
</dbReference>
<dbReference type="InterPro" id="IPR002139">
    <property type="entry name" value="Ribo/fructo_kinase"/>
</dbReference>
<dbReference type="InterPro" id="IPR029056">
    <property type="entry name" value="Ribokinase-like"/>
</dbReference>
<dbReference type="PANTHER" id="PTHR43320:SF2">
    <property type="entry name" value="2-DEHYDRO-3-DEOXYGLUCONOKINASE_2-DEHYDRO-3-DEOXYGALACTONOKINASE"/>
    <property type="match status" value="1"/>
</dbReference>
<dbReference type="PANTHER" id="PTHR43320">
    <property type="entry name" value="SUGAR KINASE"/>
    <property type="match status" value="1"/>
</dbReference>
<dbReference type="Pfam" id="PF00294">
    <property type="entry name" value="PfkB"/>
    <property type="match status" value="1"/>
</dbReference>
<dbReference type="PRINTS" id="PR00990">
    <property type="entry name" value="RIBOKINASE"/>
</dbReference>
<dbReference type="SUPFAM" id="SSF53613">
    <property type="entry name" value="Ribokinase-like"/>
    <property type="match status" value="1"/>
</dbReference>
<dbReference type="PROSITE" id="PS00584">
    <property type="entry name" value="PFKB_KINASES_2"/>
    <property type="match status" value="1"/>
</dbReference>
<protein>
    <recommendedName>
        <fullName>2-dehydro-3-deoxygluconokinase</fullName>
        <ecNumber>2.7.1.45</ecNumber>
    </recommendedName>
    <alternativeName>
        <fullName>2-keto-3-deoxygluconokinase</fullName>
    </alternativeName>
    <alternativeName>
        <fullName>3-deoxy-2-oxo-D-gluconate kinase</fullName>
    </alternativeName>
    <alternativeName>
        <fullName>KDG kinase</fullName>
    </alternativeName>
</protein>
<feature type="chain" id="PRO_0000422662" description="2-dehydro-3-deoxygluconokinase">
    <location>
        <begin position="1"/>
        <end position="309"/>
    </location>
</feature>
<feature type="active site" description="Proton acceptor" evidence="4">
    <location>
        <position position="251"/>
    </location>
</feature>
<feature type="binding site" evidence="2">
    <location>
        <begin position="34"/>
        <end position="38"/>
    </location>
    <ligand>
        <name>substrate</name>
    </ligand>
</feature>
<feature type="binding site" evidence="1">
    <location>
        <position position="89"/>
    </location>
    <ligand>
        <name>substrate</name>
    </ligand>
</feature>
<feature type="binding site" evidence="2">
    <location>
        <begin position="103"/>
        <end position="105"/>
    </location>
    <ligand>
        <name>substrate</name>
    </ligand>
</feature>
<feature type="binding site" evidence="1">
    <location>
        <begin position="165"/>
        <end position="167"/>
    </location>
    <ligand>
        <name>ATP</name>
        <dbReference type="ChEBI" id="CHEBI:30616"/>
    </ligand>
</feature>
<feature type="binding site" evidence="2">
    <location>
        <position position="167"/>
    </location>
    <ligand>
        <name>substrate</name>
    </ligand>
</feature>
<feature type="binding site" evidence="2">
    <location>
        <position position="193"/>
    </location>
    <ligand>
        <name>ATP</name>
        <dbReference type="ChEBI" id="CHEBI:30616"/>
    </ligand>
</feature>
<feature type="binding site" evidence="2">
    <location>
        <begin position="219"/>
        <end position="225"/>
    </location>
    <ligand>
        <name>ATP</name>
        <dbReference type="ChEBI" id="CHEBI:30616"/>
    </ligand>
</feature>
<feature type="binding site" evidence="2">
    <location>
        <begin position="248"/>
        <end position="251"/>
    </location>
    <ligand>
        <name>ATP</name>
        <dbReference type="ChEBI" id="CHEBI:30616"/>
    </ligand>
</feature>
<feature type="binding site" evidence="2">
    <location>
        <position position="251"/>
    </location>
    <ligand>
        <name>substrate</name>
    </ligand>
</feature>
<feature type="binding site" evidence="2">
    <location>
        <position position="275"/>
    </location>
    <ligand>
        <name>ATP</name>
        <dbReference type="ChEBI" id="CHEBI:30616"/>
    </ligand>
</feature>
<feature type="binding site" evidence="2">
    <location>
        <position position="287"/>
    </location>
    <ligand>
        <name>substrate</name>
    </ligand>
</feature>
<feature type="strand" evidence="5">
    <location>
        <begin position="3"/>
        <end position="8"/>
    </location>
</feature>
<feature type="strand" evidence="5">
    <location>
        <begin position="11"/>
        <end position="15"/>
    </location>
</feature>
<feature type="strand" evidence="5">
    <location>
        <begin position="17"/>
        <end position="20"/>
    </location>
</feature>
<feature type="helix" evidence="5">
    <location>
        <begin position="22"/>
        <end position="24"/>
    </location>
</feature>
<feature type="strand" evidence="5">
    <location>
        <begin position="27"/>
        <end position="33"/>
    </location>
</feature>
<feature type="helix" evidence="5">
    <location>
        <begin position="35"/>
        <end position="45"/>
    </location>
</feature>
<feature type="strand" evidence="5">
    <location>
        <begin position="50"/>
        <end position="56"/>
    </location>
</feature>
<feature type="helix" evidence="5">
    <location>
        <begin position="60"/>
        <end position="72"/>
    </location>
</feature>
<feature type="strand" evidence="5">
    <location>
        <begin position="79"/>
        <end position="81"/>
    </location>
</feature>
<feature type="strand" evidence="5">
    <location>
        <begin position="88"/>
        <end position="93"/>
    </location>
</feature>
<feature type="strand" evidence="5">
    <location>
        <begin position="99"/>
        <end position="104"/>
    </location>
</feature>
<feature type="helix" evidence="5">
    <location>
        <begin position="110"/>
        <end position="112"/>
    </location>
</feature>
<feature type="helix" evidence="5">
    <location>
        <begin position="120"/>
        <end position="123"/>
    </location>
</feature>
<feature type="strand" evidence="5">
    <location>
        <begin position="127"/>
        <end position="132"/>
    </location>
</feature>
<feature type="helix" evidence="5">
    <location>
        <begin position="135"/>
        <end position="137"/>
    </location>
</feature>
<feature type="helix" evidence="5">
    <location>
        <begin position="140"/>
        <end position="154"/>
    </location>
</feature>
<feature type="turn" evidence="5">
    <location>
        <begin position="155"/>
        <end position="157"/>
    </location>
</feature>
<feature type="strand" evidence="5">
    <location>
        <begin position="159"/>
        <end position="163"/>
    </location>
</feature>
<feature type="turn" evidence="5">
    <location>
        <begin position="168"/>
        <end position="170"/>
    </location>
</feature>
<feature type="helix" evidence="5">
    <location>
        <begin position="173"/>
        <end position="183"/>
    </location>
</feature>
<feature type="helix" evidence="5">
    <location>
        <begin position="184"/>
        <end position="186"/>
    </location>
</feature>
<feature type="strand" evidence="5">
    <location>
        <begin position="188"/>
        <end position="193"/>
    </location>
</feature>
<feature type="helix" evidence="5">
    <location>
        <begin position="194"/>
        <end position="201"/>
    </location>
</feature>
<feature type="helix" evidence="5">
    <location>
        <begin position="204"/>
        <end position="210"/>
    </location>
</feature>
<feature type="strand" evidence="5">
    <location>
        <begin position="214"/>
        <end position="219"/>
    </location>
</feature>
<feature type="helix" evidence="5">
    <location>
        <begin position="221"/>
        <end position="223"/>
    </location>
</feature>
<feature type="strand" evidence="5">
    <location>
        <begin position="225"/>
        <end position="229"/>
    </location>
</feature>
<feature type="strand" evidence="5">
    <location>
        <begin position="232"/>
        <end position="235"/>
    </location>
</feature>
<feature type="helix" evidence="5">
    <location>
        <begin position="249"/>
        <end position="262"/>
    </location>
</feature>
<feature type="helix" evidence="5">
    <location>
        <begin position="267"/>
        <end position="282"/>
    </location>
</feature>
<feature type="turn" evidence="5">
    <location>
        <begin position="286"/>
        <end position="290"/>
    </location>
</feature>
<feature type="helix" evidence="5">
    <location>
        <begin position="294"/>
        <end position="297"/>
    </location>
</feature>
<gene>
    <name type="primary">kdgK</name>
    <name type="ordered locus">TTHB079</name>
</gene>
<organism>
    <name type="scientific">Thermus thermophilus (strain ATCC 27634 / DSM 579 / HB8)</name>
    <dbReference type="NCBI Taxonomy" id="300852"/>
    <lineage>
        <taxon>Bacteria</taxon>
        <taxon>Thermotogati</taxon>
        <taxon>Deinococcota</taxon>
        <taxon>Deinococci</taxon>
        <taxon>Thermales</taxon>
        <taxon>Thermaceae</taxon>
        <taxon>Thermus</taxon>
    </lineage>
</organism>
<accession>Q53W83</accession>
<sequence length="309" mass="33430">MLEVVTAGEPLVALVPQEPGHLRGKRLLEVYVGGAEVNVAVALARLGVKVGFVGRVGEDELGAMVEERLRAEGVDLTHFRRAPGFTGLYLREYLPLGQGRVFYYRKGSAGSALAPGAFDPDYLEGVRFLHLSGITPALSPEARAFSLWAMEEAKRRGVRVSLDVNYRQTLWSPEEARGFLERALPGVDLLFLSEEEAELLFGRVEEALRALSAPEVVLKRGAKGAWAFVDGRRVEGSAFAVEAVDPVGAGDAFAAGYLAGAVWGLPVEERLRLANLLGASVAASRGDHEGAPYREDLEVLLKATQTFMR</sequence>
<evidence type="ECO:0000250" key="1">
    <source>
        <dbReference type="UniProtKB" id="Q97U29"/>
    </source>
</evidence>
<evidence type="ECO:0000269" key="2">
    <source>
    </source>
</evidence>
<evidence type="ECO:0000305" key="3"/>
<evidence type="ECO:0000305" key="4">
    <source>
    </source>
</evidence>
<evidence type="ECO:0007829" key="5">
    <source>
        <dbReference type="PDB" id="1V1A"/>
    </source>
</evidence>
<proteinExistence type="evidence at protein level"/>
<comment type="function">
    <text evidence="2">Involved in the degradation of glucose via the semi-phosphorylative Entner-Doudoroff pathway. Catalyzes the phosphorylation of 2-keto-3-deoxygluconate (KDG) to produce 2-keto-3-deoxy-6-phosphogluconate (KDPG).</text>
</comment>
<comment type="catalytic activity">
    <reaction evidence="2">
        <text>2-dehydro-3-deoxy-D-gluconate + ATP = 2-dehydro-3-deoxy-6-phospho-D-gluconate + ADP + H(+)</text>
        <dbReference type="Rhea" id="RHEA:14797"/>
        <dbReference type="ChEBI" id="CHEBI:15378"/>
        <dbReference type="ChEBI" id="CHEBI:30616"/>
        <dbReference type="ChEBI" id="CHEBI:57569"/>
        <dbReference type="ChEBI" id="CHEBI:57990"/>
        <dbReference type="ChEBI" id="CHEBI:456216"/>
        <dbReference type="EC" id="2.7.1.45"/>
    </reaction>
</comment>
<comment type="biophysicochemical properties">
    <kinetics>
        <KM evidence="2">0.32 mM for KDG (at 35 degrees Celsius and pH 7.4)</KM>
        <KM evidence="2">3.6 mM for 2-keto-D-gluconate (at 35 degrees Celsius and pH 7.4)</KM>
        <text>kcat is 11 sec(-1) for KDG and 2.2 sec(-1) for 2-keto-D-gluconate (at 35 degrees Celsius and pH 7.4).</text>
    </kinetics>
    <phDependence>
        <text evidence="2">Optimum pH is between 6 and 9.</text>
    </phDependence>
</comment>
<comment type="pathway">
    <text>Carbohydrate acid metabolism; 2-dehydro-3-deoxy-D-gluconate degradation; D-glyceraldehyde 3-phosphate and pyruvate from 2-dehydro-3-deoxy-D-gluconate: step 1/2.</text>
</comment>
<comment type="subunit">
    <text evidence="2">Homohexamer; trimer of dimers.</text>
</comment>
<comment type="similarity">
    <text evidence="3">Belongs to the carbohydrate kinase pfkB family.</text>
</comment>
<reference key="1">
    <citation type="submission" date="2004-11" db="EMBL/GenBank/DDBJ databases">
        <title>Complete genome sequence of Thermus thermophilus HB8.</title>
        <authorList>
            <person name="Masui R."/>
            <person name="Kurokawa K."/>
            <person name="Nakagawa N."/>
            <person name="Tokunaga F."/>
            <person name="Koyama Y."/>
            <person name="Shibata T."/>
            <person name="Oshima T."/>
            <person name="Yokoyama S."/>
            <person name="Yasunaga T."/>
            <person name="Kuramitsu S."/>
        </authorList>
    </citation>
    <scope>NUCLEOTIDE SEQUENCE [LARGE SCALE GENOMIC DNA]</scope>
    <source>
        <strain>ATCC 27634 / DSM 579 / HB8</strain>
    </source>
</reference>
<reference key="2">
    <citation type="journal article" date="2004" name="J. Mol. Biol.">
        <title>Structure of Thermus thermophilus 2-Keto-3-deoxygluconate kinase: evidence for recognition of an open chain substrate.</title>
        <authorList>
            <person name="Ohshima N."/>
            <person name="Inagaki E."/>
            <person name="Yasuike K."/>
            <person name="Takio K."/>
            <person name="Tahirov T.H."/>
        </authorList>
    </citation>
    <scope>X-RAY CRYSTALLOGRAPHY (2.10 ANGSTROMS) IN COMPLEX WITH 2-KETO-3-DEOXYGLUCONATE AND ATP</scope>
    <scope>FUNCTION</scope>
    <scope>CATALYTIC ACTIVITY</scope>
    <scope>ACTIVE SITE</scope>
    <scope>BIOPHYSICOCHEMICAL PROPERTIES</scope>
    <scope>REACTION MECHANISM</scope>
    <scope>SUBUNIT</scope>
</reference>
<keyword id="KW-0002">3D-structure</keyword>
<keyword id="KW-0067">ATP-binding</keyword>
<keyword id="KW-0119">Carbohydrate metabolism</keyword>
<keyword id="KW-0418">Kinase</keyword>
<keyword id="KW-0547">Nucleotide-binding</keyword>
<keyword id="KW-0614">Plasmid</keyword>
<keyword id="KW-1185">Reference proteome</keyword>
<keyword id="KW-0808">Transferase</keyword>
<geneLocation type="plasmid">
    <name>pTT27</name>
</geneLocation>